<gene>
    <name evidence="1" type="primary">rplD</name>
    <name type="ordered locus">EUBREC_0419</name>
</gene>
<reference key="1">
    <citation type="journal article" date="2009" name="Proc. Natl. Acad. Sci. U.S.A.">
        <title>Characterizing a model human gut microbiota composed of members of its two dominant bacterial phyla.</title>
        <authorList>
            <person name="Mahowald M.A."/>
            <person name="Rey F.E."/>
            <person name="Seedorf H."/>
            <person name="Turnbaugh P.J."/>
            <person name="Fulton R.S."/>
            <person name="Wollam A."/>
            <person name="Shah N."/>
            <person name="Wang C."/>
            <person name="Magrini V."/>
            <person name="Wilson R.K."/>
            <person name="Cantarel B.L."/>
            <person name="Coutinho P.M."/>
            <person name="Henrissat B."/>
            <person name="Crock L.W."/>
            <person name="Russell A."/>
            <person name="Verberkmoes N.C."/>
            <person name="Hettich R.L."/>
            <person name="Gordon J.I."/>
        </authorList>
    </citation>
    <scope>NUCLEOTIDE SEQUENCE [LARGE SCALE GENOMIC DNA]</scope>
    <source>
        <strain>ATCC 33656 / DSM 3377 / JCM 17463 / KCTC 5835 / LMG 30912 / VPI 0990</strain>
    </source>
</reference>
<dbReference type="EMBL" id="CP001107">
    <property type="protein sequence ID" value="ACR74210.1"/>
    <property type="molecule type" value="Genomic_DNA"/>
</dbReference>
<dbReference type="RefSeq" id="WP_012741328.1">
    <property type="nucleotide sequence ID" value="NZ_CAXSYD010000003.1"/>
</dbReference>
<dbReference type="SMR" id="C4ZBD5"/>
<dbReference type="STRING" id="515619.EUBREC_0419"/>
<dbReference type="PaxDb" id="515619-EUBREC_0419"/>
<dbReference type="GeneID" id="86987329"/>
<dbReference type="KEGG" id="ere:EUBREC_0419"/>
<dbReference type="HOGENOM" id="CLU_041575_5_2_9"/>
<dbReference type="Proteomes" id="UP000001477">
    <property type="component" value="Chromosome"/>
</dbReference>
<dbReference type="GO" id="GO:1990904">
    <property type="term" value="C:ribonucleoprotein complex"/>
    <property type="evidence" value="ECO:0007669"/>
    <property type="project" value="UniProtKB-KW"/>
</dbReference>
<dbReference type="GO" id="GO:0005840">
    <property type="term" value="C:ribosome"/>
    <property type="evidence" value="ECO:0007669"/>
    <property type="project" value="UniProtKB-KW"/>
</dbReference>
<dbReference type="GO" id="GO:0019843">
    <property type="term" value="F:rRNA binding"/>
    <property type="evidence" value="ECO:0007669"/>
    <property type="project" value="UniProtKB-UniRule"/>
</dbReference>
<dbReference type="GO" id="GO:0003735">
    <property type="term" value="F:structural constituent of ribosome"/>
    <property type="evidence" value="ECO:0007669"/>
    <property type="project" value="InterPro"/>
</dbReference>
<dbReference type="GO" id="GO:0006412">
    <property type="term" value="P:translation"/>
    <property type="evidence" value="ECO:0007669"/>
    <property type="project" value="UniProtKB-UniRule"/>
</dbReference>
<dbReference type="Gene3D" id="3.40.1370.10">
    <property type="match status" value="1"/>
</dbReference>
<dbReference type="HAMAP" id="MF_01328_B">
    <property type="entry name" value="Ribosomal_uL4_B"/>
    <property type="match status" value="1"/>
</dbReference>
<dbReference type="InterPro" id="IPR002136">
    <property type="entry name" value="Ribosomal_uL4"/>
</dbReference>
<dbReference type="InterPro" id="IPR013005">
    <property type="entry name" value="Ribosomal_uL4-like"/>
</dbReference>
<dbReference type="InterPro" id="IPR023574">
    <property type="entry name" value="Ribosomal_uL4_dom_sf"/>
</dbReference>
<dbReference type="NCBIfam" id="TIGR03953">
    <property type="entry name" value="rplD_bact"/>
    <property type="match status" value="1"/>
</dbReference>
<dbReference type="PANTHER" id="PTHR10746">
    <property type="entry name" value="50S RIBOSOMAL PROTEIN L4"/>
    <property type="match status" value="1"/>
</dbReference>
<dbReference type="PANTHER" id="PTHR10746:SF6">
    <property type="entry name" value="LARGE RIBOSOMAL SUBUNIT PROTEIN UL4M"/>
    <property type="match status" value="1"/>
</dbReference>
<dbReference type="Pfam" id="PF00573">
    <property type="entry name" value="Ribosomal_L4"/>
    <property type="match status" value="1"/>
</dbReference>
<dbReference type="SUPFAM" id="SSF52166">
    <property type="entry name" value="Ribosomal protein L4"/>
    <property type="match status" value="1"/>
</dbReference>
<accession>C4ZBD5</accession>
<comment type="function">
    <text evidence="1">One of the primary rRNA binding proteins, this protein initially binds near the 5'-end of the 23S rRNA. It is important during the early stages of 50S assembly. It makes multiple contacts with different domains of the 23S rRNA in the assembled 50S subunit and ribosome.</text>
</comment>
<comment type="function">
    <text evidence="1">Forms part of the polypeptide exit tunnel.</text>
</comment>
<comment type="subunit">
    <text evidence="1">Part of the 50S ribosomal subunit.</text>
</comment>
<comment type="similarity">
    <text evidence="1">Belongs to the universal ribosomal protein uL4 family.</text>
</comment>
<sequence length="206" mass="22910">MANVAVYNMEGKEVDKIELNDSIFGVEINEHLVHMAVLQQLANKRQGTQKAKTRSEVRGGGRKPWRQKGTGHARQGSTRSPQWTGGGVVFAPTPRDYSFKLNKKEKRAALKSALTSRVVENKFVVVDELKLDEIKTKKFVEVLKNLNVEKALVVLNDMDEKVIASAANIPTVKTTQTNELNVFDVLKYDTVVVTKAAVATIEEVYA</sequence>
<proteinExistence type="inferred from homology"/>
<organism>
    <name type="scientific">Agathobacter rectalis (strain ATCC 33656 / DSM 3377 / JCM 17463 / KCTC 5835 / VPI 0990)</name>
    <name type="common">Eubacterium rectale</name>
    <dbReference type="NCBI Taxonomy" id="515619"/>
    <lineage>
        <taxon>Bacteria</taxon>
        <taxon>Bacillati</taxon>
        <taxon>Bacillota</taxon>
        <taxon>Clostridia</taxon>
        <taxon>Lachnospirales</taxon>
        <taxon>Lachnospiraceae</taxon>
        <taxon>Agathobacter</taxon>
    </lineage>
</organism>
<protein>
    <recommendedName>
        <fullName evidence="1">Large ribosomal subunit protein uL4</fullName>
    </recommendedName>
    <alternativeName>
        <fullName evidence="3">50S ribosomal protein L4</fullName>
    </alternativeName>
</protein>
<evidence type="ECO:0000255" key="1">
    <source>
        <dbReference type="HAMAP-Rule" id="MF_01328"/>
    </source>
</evidence>
<evidence type="ECO:0000256" key="2">
    <source>
        <dbReference type="SAM" id="MobiDB-lite"/>
    </source>
</evidence>
<evidence type="ECO:0000305" key="3"/>
<name>RL4_AGARV</name>
<feature type="chain" id="PRO_1000214572" description="Large ribosomal subunit protein uL4">
    <location>
        <begin position="1"/>
        <end position="206"/>
    </location>
</feature>
<feature type="region of interest" description="Disordered" evidence="2">
    <location>
        <begin position="44"/>
        <end position="87"/>
    </location>
</feature>
<feature type="compositionally biased region" description="Basic residues" evidence="2">
    <location>
        <begin position="60"/>
        <end position="71"/>
    </location>
</feature>
<keyword id="KW-0687">Ribonucleoprotein</keyword>
<keyword id="KW-0689">Ribosomal protein</keyword>
<keyword id="KW-0694">RNA-binding</keyword>
<keyword id="KW-0699">rRNA-binding</keyword>